<reference key="1">
    <citation type="journal article" date="2001" name="DNA Res.">
        <title>Complete genome sequence of an aerobic thermoacidophilic Crenarchaeon, Sulfolobus tokodaii strain7.</title>
        <authorList>
            <person name="Kawarabayasi Y."/>
            <person name="Hino Y."/>
            <person name="Horikawa H."/>
            <person name="Jin-no K."/>
            <person name="Takahashi M."/>
            <person name="Sekine M."/>
            <person name="Baba S."/>
            <person name="Ankai A."/>
            <person name="Kosugi H."/>
            <person name="Hosoyama A."/>
            <person name="Fukui S."/>
            <person name="Nagai Y."/>
            <person name="Nishijima K."/>
            <person name="Otsuka R."/>
            <person name="Nakazawa H."/>
            <person name="Takamiya M."/>
            <person name="Kato Y."/>
            <person name="Yoshizawa T."/>
            <person name="Tanaka T."/>
            <person name="Kudoh Y."/>
            <person name="Yamazaki J."/>
            <person name="Kushida N."/>
            <person name="Oguchi A."/>
            <person name="Aoki K."/>
            <person name="Masuda S."/>
            <person name="Yanagii M."/>
            <person name="Nishimura M."/>
            <person name="Yamagishi A."/>
            <person name="Oshima T."/>
            <person name="Kikuchi H."/>
        </authorList>
    </citation>
    <scope>NUCLEOTIDE SEQUENCE [LARGE SCALE GENOMIC DNA]</scope>
    <source>
        <strain>DSM 16993 / JCM 10545 / NBRC 100140 / 7</strain>
    </source>
</reference>
<keyword id="KW-0342">GTP-binding</keyword>
<keyword id="KW-0378">Hydrolase</keyword>
<keyword id="KW-0547">Nucleotide-binding</keyword>
<keyword id="KW-1185">Reference proteome</keyword>
<feature type="chain" id="PRO_0000145759" description="GTP cyclohydrolase III">
    <location>
        <begin position="1"/>
        <end position="225"/>
    </location>
</feature>
<evidence type="ECO:0000255" key="1">
    <source>
        <dbReference type="HAMAP-Rule" id="MF_00608"/>
    </source>
</evidence>
<sequence length="225" mass="25964">MKIMQINLVDYKEWTESLGYDREWKIQNFQHGFLSRLNEIAAEINSFIITYRYDSYIMLLDGVLIGKNDYILTKIKELSPVPIDICFGYGKTLLDAERNCSINMDNILLAKDEKVLVAHFDLDGFSRKRFLFDAYLEVYKIYNKLFNYAMELGGLAYYFGGDNIGIFLGVDNINKVIELANSFPNMKVGIGIGNNPREALKNAAEALHIIRIYRDRKIEIVDSKN</sequence>
<dbReference type="EC" id="3.5.4.29" evidence="1"/>
<dbReference type="EMBL" id="BA000023">
    <property type="protein sequence ID" value="BAK54263.1"/>
    <property type="molecule type" value="Genomic_DNA"/>
</dbReference>
<dbReference type="RefSeq" id="WP_010978359.1">
    <property type="nucleotide sequence ID" value="NC_003106.2"/>
</dbReference>
<dbReference type="SMR" id="Q975M4"/>
<dbReference type="STRING" id="273063.STK_03950"/>
<dbReference type="GeneID" id="1458320"/>
<dbReference type="KEGG" id="sto:STK_03950"/>
<dbReference type="PATRIC" id="fig|273063.9.peg.456"/>
<dbReference type="eggNOG" id="arCOG04202">
    <property type="taxonomic scope" value="Archaea"/>
</dbReference>
<dbReference type="OrthoDB" id="25211at2157"/>
<dbReference type="Proteomes" id="UP000001015">
    <property type="component" value="Chromosome"/>
</dbReference>
<dbReference type="GO" id="GO:0005525">
    <property type="term" value="F:GTP binding"/>
    <property type="evidence" value="ECO:0007669"/>
    <property type="project" value="UniProtKB-KW"/>
</dbReference>
<dbReference type="GO" id="GO:0043740">
    <property type="term" value="F:GTP cyclohydrolase IIa activity"/>
    <property type="evidence" value="ECO:0007669"/>
    <property type="project" value="UniProtKB-EC"/>
</dbReference>
<dbReference type="GO" id="GO:0009058">
    <property type="term" value="P:biosynthetic process"/>
    <property type="evidence" value="ECO:0007669"/>
    <property type="project" value="InterPro"/>
</dbReference>
<dbReference type="Gene3D" id="3.30.70.270">
    <property type="match status" value="2"/>
</dbReference>
<dbReference type="HAMAP" id="MF_00608">
    <property type="entry name" value="GTP_cyclohydro_3"/>
    <property type="match status" value="1"/>
</dbReference>
<dbReference type="InterPro" id="IPR007839">
    <property type="entry name" value="GTP_CycHdrlase_3"/>
</dbReference>
<dbReference type="InterPro" id="IPR043128">
    <property type="entry name" value="Rev_trsase/Diguanyl_cyclase"/>
</dbReference>
<dbReference type="PANTHER" id="PTHR42202">
    <property type="entry name" value="GTP CYCLOHYDROLASE III"/>
    <property type="match status" value="1"/>
</dbReference>
<dbReference type="PANTHER" id="PTHR42202:SF1">
    <property type="entry name" value="GTP CYCLOHYDROLASE III"/>
    <property type="match status" value="1"/>
</dbReference>
<dbReference type="Pfam" id="PF05165">
    <property type="entry name" value="GCH_III"/>
    <property type="match status" value="2"/>
</dbReference>
<dbReference type="PIRSF" id="PIRSF009265">
    <property type="entry name" value="GTP_cyclohydro_3"/>
    <property type="match status" value="1"/>
</dbReference>
<protein>
    <recommendedName>
        <fullName evidence="1">GTP cyclohydrolase III</fullName>
        <ecNumber evidence="1">3.5.4.29</ecNumber>
    </recommendedName>
</protein>
<comment type="function">
    <text evidence="1">Catalyzes the formation of 2-amino-5-formylamino-6-ribofuranosylamino-4(3H)-pyrimidinone ribonucleotide monophosphate and inorganic phosphate from GTP. Also has an independent pyrophosphate phosphohydrolase activity.</text>
</comment>
<comment type="catalytic activity">
    <reaction evidence="1">
        <text>GTP + 3 H2O = 2-amino-5-formylamino-6-(5-phospho-D-ribosylamino)pyrimidin-4(3H)-one + 2 phosphate + 2 H(+)</text>
        <dbReference type="Rhea" id="RHEA:22468"/>
        <dbReference type="ChEBI" id="CHEBI:15377"/>
        <dbReference type="ChEBI" id="CHEBI:15378"/>
        <dbReference type="ChEBI" id="CHEBI:37565"/>
        <dbReference type="ChEBI" id="CHEBI:43474"/>
        <dbReference type="ChEBI" id="CHEBI:57258"/>
        <dbReference type="EC" id="3.5.4.29"/>
    </reaction>
</comment>
<comment type="similarity">
    <text evidence="1">Belongs to the archaeal-type GTP cyclohydrolase family.</text>
</comment>
<accession>Q975M4</accession>
<accession>F9VMW6</accession>
<organism>
    <name type="scientific">Sulfurisphaera tokodaii (strain DSM 16993 / JCM 10545 / NBRC 100140 / 7)</name>
    <name type="common">Sulfolobus tokodaii</name>
    <dbReference type="NCBI Taxonomy" id="273063"/>
    <lineage>
        <taxon>Archaea</taxon>
        <taxon>Thermoproteota</taxon>
        <taxon>Thermoprotei</taxon>
        <taxon>Sulfolobales</taxon>
        <taxon>Sulfolobaceae</taxon>
        <taxon>Sulfurisphaera</taxon>
    </lineage>
</organism>
<name>GCH3_SULTO</name>
<gene>
    <name evidence="1" type="primary">gch3</name>
    <name type="ordered locus">STK_03950</name>
</gene>
<proteinExistence type="inferred from homology"/>